<gene>
    <name type="primary">Lo2</name>
</gene>
<keyword id="KW-0157">Chromophore</keyword>
<keyword id="KW-1015">Disulfide bond</keyword>
<keyword id="KW-0297">G-protein coupled receptor</keyword>
<keyword id="KW-0325">Glycoprotein</keyword>
<keyword id="KW-0472">Membrane</keyword>
<keyword id="KW-0597">Phosphoprotein</keyword>
<keyword id="KW-0600">Photoreceptor protein</keyword>
<keyword id="KW-0675">Receptor</keyword>
<keyword id="KW-0681">Retinal protein</keyword>
<keyword id="KW-0716">Sensory transduction</keyword>
<keyword id="KW-0807">Transducer</keyword>
<keyword id="KW-0812">Transmembrane</keyword>
<keyword id="KW-1133">Transmembrane helix</keyword>
<keyword id="KW-0844">Vision</keyword>
<proteinExistence type="evidence at transcript level"/>
<accession>Q26495</accession>
<dbReference type="EMBL" id="X80072">
    <property type="protein sequence ID" value="CAA56378.1"/>
    <property type="molecule type" value="mRNA"/>
</dbReference>
<dbReference type="SMR" id="Q26495"/>
<dbReference type="GlyCosmos" id="Q26495">
    <property type="glycosylation" value="1 site, No reported glycans"/>
</dbReference>
<dbReference type="EnsemblMetazoa" id="XM_050005422.1">
    <property type="protein sequence ID" value="XP_049861379.1"/>
    <property type="gene ID" value="LOC126355196"/>
</dbReference>
<dbReference type="OrthoDB" id="2105199at2759"/>
<dbReference type="GO" id="GO:0016020">
    <property type="term" value="C:membrane"/>
    <property type="evidence" value="ECO:0007669"/>
    <property type="project" value="UniProtKB-SubCell"/>
</dbReference>
<dbReference type="GO" id="GO:0004930">
    <property type="term" value="F:G protein-coupled receptor activity"/>
    <property type="evidence" value="ECO:0007669"/>
    <property type="project" value="UniProtKB-KW"/>
</dbReference>
<dbReference type="GO" id="GO:0009881">
    <property type="term" value="F:photoreceptor activity"/>
    <property type="evidence" value="ECO:0007669"/>
    <property type="project" value="UniProtKB-KW"/>
</dbReference>
<dbReference type="GO" id="GO:0007602">
    <property type="term" value="P:phototransduction"/>
    <property type="evidence" value="ECO:0007669"/>
    <property type="project" value="UniProtKB-KW"/>
</dbReference>
<dbReference type="GO" id="GO:0007601">
    <property type="term" value="P:visual perception"/>
    <property type="evidence" value="ECO:0007669"/>
    <property type="project" value="UniProtKB-KW"/>
</dbReference>
<dbReference type="CDD" id="cd15079">
    <property type="entry name" value="7tmA_photoreceptors_insect"/>
    <property type="match status" value="1"/>
</dbReference>
<dbReference type="FunFam" id="1.20.1070.10:FF:000044">
    <property type="entry name" value="Opsin, ultraviolet-sensitive"/>
    <property type="match status" value="1"/>
</dbReference>
<dbReference type="Gene3D" id="1.20.1070.10">
    <property type="entry name" value="Rhodopsin 7-helix transmembrane proteins"/>
    <property type="match status" value="1"/>
</dbReference>
<dbReference type="InterPro" id="IPR050125">
    <property type="entry name" value="GPCR_opsins"/>
</dbReference>
<dbReference type="InterPro" id="IPR000276">
    <property type="entry name" value="GPCR_Rhodpsn"/>
</dbReference>
<dbReference type="InterPro" id="IPR017452">
    <property type="entry name" value="GPCR_Rhodpsn_7TM"/>
</dbReference>
<dbReference type="InterPro" id="IPR001760">
    <property type="entry name" value="Opsin"/>
</dbReference>
<dbReference type="InterPro" id="IPR027430">
    <property type="entry name" value="Retinal_BS"/>
</dbReference>
<dbReference type="PANTHER" id="PTHR24240">
    <property type="entry name" value="OPSIN"/>
    <property type="match status" value="1"/>
</dbReference>
<dbReference type="Pfam" id="PF00001">
    <property type="entry name" value="7tm_1"/>
    <property type="match status" value="1"/>
</dbReference>
<dbReference type="PRINTS" id="PR00237">
    <property type="entry name" value="GPCRRHODOPSN"/>
</dbReference>
<dbReference type="PRINTS" id="PR00577">
    <property type="entry name" value="OPSINRH3RH4"/>
</dbReference>
<dbReference type="SUPFAM" id="SSF81321">
    <property type="entry name" value="Family A G protein-coupled receptor-like"/>
    <property type="match status" value="1"/>
</dbReference>
<dbReference type="PROSITE" id="PS00237">
    <property type="entry name" value="G_PROTEIN_RECEP_F1_1"/>
    <property type="match status" value="1"/>
</dbReference>
<dbReference type="PROSITE" id="PS50262">
    <property type="entry name" value="G_PROTEIN_RECEP_F1_2"/>
    <property type="match status" value="1"/>
</dbReference>
<dbReference type="PROSITE" id="PS00238">
    <property type="entry name" value="OPSIN"/>
    <property type="match status" value="1"/>
</dbReference>
<evidence type="ECO:0000250" key="1"/>
<evidence type="ECO:0000255" key="2"/>
<evidence type="ECO:0000255" key="3">
    <source>
        <dbReference type="PROSITE-ProRule" id="PRU00521"/>
    </source>
</evidence>
<evidence type="ECO:0000256" key="4">
    <source>
        <dbReference type="SAM" id="MobiDB-lite"/>
    </source>
</evidence>
<protein>
    <recommendedName>
        <fullName>Opsin-2</fullName>
    </recommendedName>
</protein>
<reference key="1">
    <citation type="journal article" date="1997" name="Vision Res.">
        <title>Primary structure of locust opsins: a speculative model which may account for ultraviolet wavelength light detection.</title>
        <authorList>
            <person name="Towner P."/>
            <person name="Harris P."/>
            <person name="Wolstenholme A.J."/>
            <person name="Hill C."/>
            <person name="Worm K."/>
            <person name="Gartner W."/>
        </authorList>
    </citation>
    <scope>NUCLEOTIDE SEQUENCE [MRNA]</scope>
</reference>
<feature type="chain" id="PRO_0000197636" description="Opsin-2">
    <location>
        <begin position="1"/>
        <end position="380"/>
    </location>
</feature>
<feature type="topological domain" description="Extracellular">
    <location>
        <begin position="1"/>
        <end position="51"/>
    </location>
</feature>
<feature type="transmembrane region" description="Helical; Name=1" evidence="2">
    <location>
        <begin position="52"/>
        <end position="76"/>
    </location>
</feature>
<feature type="topological domain" description="Cytoplasmic">
    <location>
        <begin position="77"/>
        <end position="88"/>
    </location>
</feature>
<feature type="transmembrane region" description="Helical; Name=2" evidence="2">
    <location>
        <begin position="89"/>
        <end position="115"/>
    </location>
</feature>
<feature type="topological domain" description="Extracellular">
    <location>
        <begin position="116"/>
        <end position="128"/>
    </location>
</feature>
<feature type="transmembrane region" description="Helical; Name=3" evidence="2">
    <location>
        <begin position="129"/>
        <end position="148"/>
    </location>
</feature>
<feature type="topological domain" description="Cytoplasmic">
    <location>
        <begin position="149"/>
        <end position="166"/>
    </location>
</feature>
<feature type="transmembrane region" description="Helical; Name=4" evidence="2">
    <location>
        <begin position="167"/>
        <end position="191"/>
    </location>
</feature>
<feature type="topological domain" description="Extracellular">
    <location>
        <begin position="192"/>
        <end position="215"/>
    </location>
</feature>
<feature type="transmembrane region" description="Helical; Name=5" evidence="2">
    <location>
        <begin position="216"/>
        <end position="243"/>
    </location>
</feature>
<feature type="topological domain" description="Cytoplasmic">
    <location>
        <begin position="244"/>
        <end position="279"/>
    </location>
</feature>
<feature type="transmembrane region" description="Helical; Name=6" evidence="2">
    <location>
        <begin position="280"/>
        <end position="303"/>
    </location>
</feature>
<feature type="topological domain" description="Extracellular">
    <location>
        <begin position="304"/>
        <end position="311"/>
    </location>
</feature>
<feature type="transmembrane region" description="Helical; Name=7" evidence="2">
    <location>
        <begin position="312"/>
        <end position="336"/>
    </location>
</feature>
<feature type="topological domain" description="Cytoplasmic">
    <location>
        <begin position="337"/>
        <end position="380"/>
    </location>
</feature>
<feature type="region of interest" description="Disordered" evidence="4">
    <location>
        <begin position="358"/>
        <end position="380"/>
    </location>
</feature>
<feature type="compositionally biased region" description="Low complexity" evidence="4">
    <location>
        <begin position="362"/>
        <end position="372"/>
    </location>
</feature>
<feature type="modified residue" description="N6-(retinylidene)lysine" evidence="1">
    <location>
        <position position="323"/>
    </location>
</feature>
<feature type="glycosylation site" description="N-linked (GlcNAc...) asparagine" evidence="2">
    <location>
        <position position="3"/>
    </location>
</feature>
<feature type="disulfide bond" evidence="3">
    <location>
        <begin position="125"/>
        <end position="202"/>
    </location>
</feature>
<sequence>MVNTTDFYPVPAAMAYESSVGLPLLGWNVPTEHLDLVHPHWRSFQVPNKYWHFGLAFVYFMLMCMSSLGNGIVLWIYATTKSIRTPSNMFIVNLALFDVLMLLEMPMLVVSSLFYQRPVGWELGCDIYAALGSVAGIGSAINNAAIAFDRYRTISCPIDGRLTQGQVLALIAGTWVWTLPFTLMPLLRIWSRFTAEGFLTTCSFDYLTDDEDTKVFVGCIFAWSYAFPLCLICCFYYRLIGAVREHEKMLRDQAKKMNVKSLQSNADTEAQSAEIRIAKVALTIFFLFLCSWTPYAVVAMIGAFGNRAALTPLSTMIPAVTAKIVSCIDPWVYAINHPRFRAEVQKRMKWLHLGEDARSSKSDTSSTATDRTVGNVSASA</sequence>
<comment type="function">
    <text>Visual pigments are the light-absorbing molecules that mediate vision. They consist of an apoprotein, opsin, covalently linked to cis-retinal.</text>
</comment>
<comment type="subcellular location">
    <subcellularLocation>
        <location>Membrane</location>
        <topology>Multi-pass membrane protein</topology>
    </subcellularLocation>
</comment>
<comment type="PTM">
    <text evidence="1">Phosphorylated on some or all of the serine and threonine residues present in the C-terminal region.</text>
</comment>
<comment type="similarity">
    <text evidence="3">Belongs to the G-protein coupled receptor 1 family. Opsin subfamily.</text>
</comment>
<organism>
    <name type="scientific">Schistocerca gregaria</name>
    <name type="common">Desert locust</name>
    <name type="synonym">Gryllus gregarius</name>
    <dbReference type="NCBI Taxonomy" id="7010"/>
    <lineage>
        <taxon>Eukaryota</taxon>
        <taxon>Metazoa</taxon>
        <taxon>Ecdysozoa</taxon>
        <taxon>Arthropoda</taxon>
        <taxon>Hexapoda</taxon>
        <taxon>Insecta</taxon>
        <taxon>Pterygota</taxon>
        <taxon>Neoptera</taxon>
        <taxon>Polyneoptera</taxon>
        <taxon>Orthoptera</taxon>
        <taxon>Caelifera</taxon>
        <taxon>Acrididea</taxon>
        <taxon>Acridomorpha</taxon>
        <taxon>Acridoidea</taxon>
        <taxon>Acrididae</taxon>
        <taxon>Cyrtacanthacridinae</taxon>
        <taxon>Schistocerca</taxon>
    </lineage>
</organism>
<name>OPS2_SCHGR</name>